<evidence type="ECO:0000250" key="1"/>
<evidence type="ECO:0000269" key="2">
    <source>
    </source>
</evidence>
<evidence type="ECO:0000305" key="3"/>
<accession>P00108</accession>
<protein>
    <recommendedName>
        <fullName>Cytochrome c6</fullName>
    </recommendedName>
    <alternativeName>
        <fullName>Cytochrome c-553</fullName>
    </alternativeName>
    <alternativeName>
        <fullName>Cytochrome c553</fullName>
    </alternativeName>
    <alternativeName>
        <fullName>Soluble cytochrome f</fullName>
    </alternativeName>
</protein>
<feature type="chain" id="PRO_0000208679" description="Cytochrome c6">
    <location>
        <begin position="1"/>
        <end position="85"/>
    </location>
</feature>
<feature type="binding site" description="covalent" evidence="2">
    <location>
        <position position="14"/>
    </location>
    <ligand>
        <name>heme c</name>
        <dbReference type="ChEBI" id="CHEBI:61717"/>
    </ligand>
</feature>
<feature type="binding site" description="covalent" evidence="2">
    <location>
        <position position="17"/>
    </location>
    <ligand>
        <name>heme c</name>
        <dbReference type="ChEBI" id="CHEBI:61717"/>
    </ligand>
</feature>
<feature type="binding site" description="axial binding residue">
    <location>
        <position position="18"/>
    </location>
    <ligand>
        <name>heme c</name>
        <dbReference type="ChEBI" id="CHEBI:61717"/>
    </ligand>
    <ligandPart>
        <name>Fe</name>
        <dbReference type="ChEBI" id="CHEBI:18248"/>
    </ligandPart>
</feature>
<feature type="binding site" description="axial binding residue">
    <location>
        <position position="58"/>
    </location>
    <ligand>
        <name>heme c</name>
        <dbReference type="ChEBI" id="CHEBI:61717"/>
    </ligand>
    <ligandPart>
        <name>Fe</name>
        <dbReference type="ChEBI" id="CHEBI:18248"/>
    </ligandPart>
</feature>
<organism>
    <name type="scientific">Petalonia fascia</name>
    <name type="common">False kelp</name>
    <name type="synonym">Fucus fascia</name>
    <dbReference type="NCBI Taxonomy" id="2893"/>
    <lineage>
        <taxon>Eukaryota</taxon>
        <taxon>Sar</taxon>
        <taxon>Stramenopiles</taxon>
        <taxon>Ochrophyta</taxon>
        <taxon>PX clade</taxon>
        <taxon>Phaeophyceae</taxon>
        <taxon>Ectocarpales</taxon>
        <taxon>Scytosiphonaceae</taxon>
        <taxon>Petalonia</taxon>
    </lineage>
</organism>
<dbReference type="PIR" id="A00100">
    <property type="entry name" value="CCPF6"/>
</dbReference>
<dbReference type="SMR" id="P00108"/>
<dbReference type="GO" id="GO:0009543">
    <property type="term" value="C:chloroplast thylakoid lumen"/>
    <property type="evidence" value="ECO:0007669"/>
    <property type="project" value="UniProtKB-SubCell"/>
</dbReference>
<dbReference type="GO" id="GO:0009055">
    <property type="term" value="F:electron transfer activity"/>
    <property type="evidence" value="ECO:0007669"/>
    <property type="project" value="InterPro"/>
</dbReference>
<dbReference type="GO" id="GO:0020037">
    <property type="term" value="F:heme binding"/>
    <property type="evidence" value="ECO:0007669"/>
    <property type="project" value="InterPro"/>
</dbReference>
<dbReference type="GO" id="GO:0005506">
    <property type="term" value="F:iron ion binding"/>
    <property type="evidence" value="ECO:0007669"/>
    <property type="project" value="InterPro"/>
</dbReference>
<dbReference type="GO" id="GO:0015979">
    <property type="term" value="P:photosynthesis"/>
    <property type="evidence" value="ECO:0007669"/>
    <property type="project" value="UniProtKB-KW"/>
</dbReference>
<dbReference type="FunFam" id="1.10.760.10:FF:000038">
    <property type="entry name" value="Cytochrome c6"/>
    <property type="match status" value="1"/>
</dbReference>
<dbReference type="Gene3D" id="1.10.760.10">
    <property type="entry name" value="Cytochrome c-like domain"/>
    <property type="match status" value="1"/>
</dbReference>
<dbReference type="HAMAP" id="MF_00594">
    <property type="entry name" value="Cytc_PetJ"/>
    <property type="match status" value="1"/>
</dbReference>
<dbReference type="InterPro" id="IPR009056">
    <property type="entry name" value="Cyt_c-like_dom"/>
</dbReference>
<dbReference type="InterPro" id="IPR036909">
    <property type="entry name" value="Cyt_c-like_dom_sf"/>
</dbReference>
<dbReference type="InterPro" id="IPR023655">
    <property type="entry name" value="Cyt_C6"/>
</dbReference>
<dbReference type="InterPro" id="IPR008168">
    <property type="entry name" value="Cyt_C_IC"/>
</dbReference>
<dbReference type="PANTHER" id="PTHR34688">
    <property type="entry name" value="CYTOCHROME C6, CHLOROPLASTIC"/>
    <property type="match status" value="1"/>
</dbReference>
<dbReference type="PANTHER" id="PTHR34688:SF2">
    <property type="entry name" value="CYTOCHROME C6, CHLOROPLASTIC"/>
    <property type="match status" value="1"/>
</dbReference>
<dbReference type="Pfam" id="PF13442">
    <property type="entry name" value="Cytochrome_CBB3"/>
    <property type="match status" value="1"/>
</dbReference>
<dbReference type="PRINTS" id="PR00605">
    <property type="entry name" value="CYTCHROMECIC"/>
</dbReference>
<dbReference type="SUPFAM" id="SSF46626">
    <property type="entry name" value="Cytochrome c"/>
    <property type="match status" value="1"/>
</dbReference>
<dbReference type="PROSITE" id="PS51007">
    <property type="entry name" value="CYTC"/>
    <property type="match status" value="1"/>
</dbReference>
<keyword id="KW-0150">Chloroplast</keyword>
<keyword id="KW-0903">Direct protein sequencing</keyword>
<keyword id="KW-0249">Electron transport</keyword>
<keyword id="KW-0349">Heme</keyword>
<keyword id="KW-0408">Iron</keyword>
<keyword id="KW-0479">Metal-binding</keyword>
<keyword id="KW-0602">Photosynthesis</keyword>
<keyword id="KW-0934">Plastid</keyword>
<keyword id="KW-0793">Thylakoid</keyword>
<keyword id="KW-0813">Transport</keyword>
<name>CYC6_PETFA</name>
<reference key="1">
    <citation type="journal article" date="1981" name="J. Biochem.">
        <title>Studies on algal cytochromes. III. Amino acid sequence of cytochrome c-553 from a brown alga, Petalonia fascia.</title>
        <authorList>
            <person name="Sugimura Y."/>
            <person name="Hase T."/>
            <person name="Matsubara H."/>
            <person name="Shimokoriyama M."/>
        </authorList>
    </citation>
    <scope>PROTEIN SEQUENCE</scope>
</reference>
<proteinExistence type="evidence at protein level"/>
<gene>
    <name type="primary">petJ</name>
</gene>
<sequence length="85" mass="9207">VDINNGESVFTANCSACHAGGNNVIMPEKTLKKDALEENEMNNIKSITYQVTNGKNAMPAFGGRLSETDIEDVANFVISQSQKGW</sequence>
<comment type="function">
    <text>Functions as an electron carrier between membrane-bound cytochrome b6-f and photosystem I in oxygenic photosynthesis.</text>
</comment>
<comment type="subunit">
    <text evidence="1">Monomer.</text>
</comment>
<comment type="subcellular location">
    <subcellularLocation>
        <location>Plastid</location>
        <location>Chloroplast thylakoid lumen</location>
    </subcellularLocation>
</comment>
<comment type="PTM">
    <text>Binds 1 heme c group covalently per subunit.</text>
</comment>
<comment type="similarity">
    <text evidence="3">Belongs to the cytochrome c family. PetJ subfamily.</text>
</comment>